<comment type="subcellular location">
    <subcellularLocation>
        <location>Membrane</location>
        <topology>Multi-pass membrane protein</topology>
    </subcellularLocation>
</comment>
<comment type="similarity">
    <text evidence="4">Belongs to the synaptogyrin family.</text>
</comment>
<sequence length="233" mass="25795">MHLPESLHDLADNETVRFLRRPKSISRIFGGVFSLVIFSSLLTDGYQNRTESPQLRCVLNSNHMACSFAVGAGFLSFLSCLVFLAIDAYERRLVGTRFKIAFQLLDFILAVLWAGVWFVAFCFLASQWQHSKSKHFLLGNSSAKAAIALSFFSVPVWILQAYLAFQDLRDEAPVPYKRSLEEGSVVLNTLSPSSTSPSNPPITGPNSLSYTSSALSPYMTTPKAPRLAMMPDS</sequence>
<reference key="1">
    <citation type="submission" date="1998-10" db="EMBL/GenBank/DDBJ databases">
        <title>Cloning of a novel member of synaptogyrin gene family.</title>
        <authorList>
            <person name="Kedra D."/>
            <person name="Dumanski J.P."/>
        </authorList>
    </citation>
    <scope>NUCLEOTIDE SEQUENCE [MRNA]</scope>
</reference>
<reference key="2">
    <citation type="journal article" date="2005" name="Science">
        <title>The transcriptional landscape of the mammalian genome.</title>
        <authorList>
            <person name="Carninci P."/>
            <person name="Kasukawa T."/>
            <person name="Katayama S."/>
            <person name="Gough J."/>
            <person name="Frith M.C."/>
            <person name="Maeda N."/>
            <person name="Oyama R."/>
            <person name="Ravasi T."/>
            <person name="Lenhard B."/>
            <person name="Wells C."/>
            <person name="Kodzius R."/>
            <person name="Shimokawa K."/>
            <person name="Bajic V.B."/>
            <person name="Brenner S.E."/>
            <person name="Batalov S."/>
            <person name="Forrest A.R."/>
            <person name="Zavolan M."/>
            <person name="Davis M.J."/>
            <person name="Wilming L.G."/>
            <person name="Aidinis V."/>
            <person name="Allen J.E."/>
            <person name="Ambesi-Impiombato A."/>
            <person name="Apweiler R."/>
            <person name="Aturaliya R.N."/>
            <person name="Bailey T.L."/>
            <person name="Bansal M."/>
            <person name="Baxter L."/>
            <person name="Beisel K.W."/>
            <person name="Bersano T."/>
            <person name="Bono H."/>
            <person name="Chalk A.M."/>
            <person name="Chiu K.P."/>
            <person name="Choudhary V."/>
            <person name="Christoffels A."/>
            <person name="Clutterbuck D.R."/>
            <person name="Crowe M.L."/>
            <person name="Dalla E."/>
            <person name="Dalrymple B.P."/>
            <person name="de Bono B."/>
            <person name="Della Gatta G."/>
            <person name="di Bernardo D."/>
            <person name="Down T."/>
            <person name="Engstrom P."/>
            <person name="Fagiolini M."/>
            <person name="Faulkner G."/>
            <person name="Fletcher C.F."/>
            <person name="Fukushima T."/>
            <person name="Furuno M."/>
            <person name="Futaki S."/>
            <person name="Gariboldi M."/>
            <person name="Georgii-Hemming P."/>
            <person name="Gingeras T.R."/>
            <person name="Gojobori T."/>
            <person name="Green R.E."/>
            <person name="Gustincich S."/>
            <person name="Harbers M."/>
            <person name="Hayashi Y."/>
            <person name="Hensch T.K."/>
            <person name="Hirokawa N."/>
            <person name="Hill D."/>
            <person name="Huminiecki L."/>
            <person name="Iacono M."/>
            <person name="Ikeo K."/>
            <person name="Iwama A."/>
            <person name="Ishikawa T."/>
            <person name="Jakt M."/>
            <person name="Kanapin A."/>
            <person name="Katoh M."/>
            <person name="Kawasawa Y."/>
            <person name="Kelso J."/>
            <person name="Kitamura H."/>
            <person name="Kitano H."/>
            <person name="Kollias G."/>
            <person name="Krishnan S.P."/>
            <person name="Kruger A."/>
            <person name="Kummerfeld S.K."/>
            <person name="Kurochkin I.V."/>
            <person name="Lareau L.F."/>
            <person name="Lazarevic D."/>
            <person name="Lipovich L."/>
            <person name="Liu J."/>
            <person name="Liuni S."/>
            <person name="McWilliam S."/>
            <person name="Madan Babu M."/>
            <person name="Madera M."/>
            <person name="Marchionni L."/>
            <person name="Matsuda H."/>
            <person name="Matsuzawa S."/>
            <person name="Miki H."/>
            <person name="Mignone F."/>
            <person name="Miyake S."/>
            <person name="Morris K."/>
            <person name="Mottagui-Tabar S."/>
            <person name="Mulder N."/>
            <person name="Nakano N."/>
            <person name="Nakauchi H."/>
            <person name="Ng P."/>
            <person name="Nilsson R."/>
            <person name="Nishiguchi S."/>
            <person name="Nishikawa S."/>
            <person name="Nori F."/>
            <person name="Ohara O."/>
            <person name="Okazaki Y."/>
            <person name="Orlando V."/>
            <person name="Pang K.C."/>
            <person name="Pavan W.J."/>
            <person name="Pavesi G."/>
            <person name="Pesole G."/>
            <person name="Petrovsky N."/>
            <person name="Piazza S."/>
            <person name="Reed J."/>
            <person name="Reid J.F."/>
            <person name="Ring B.Z."/>
            <person name="Ringwald M."/>
            <person name="Rost B."/>
            <person name="Ruan Y."/>
            <person name="Salzberg S.L."/>
            <person name="Sandelin A."/>
            <person name="Schneider C."/>
            <person name="Schoenbach C."/>
            <person name="Sekiguchi K."/>
            <person name="Semple C.A."/>
            <person name="Seno S."/>
            <person name="Sessa L."/>
            <person name="Sheng Y."/>
            <person name="Shibata Y."/>
            <person name="Shimada H."/>
            <person name="Shimada K."/>
            <person name="Silva D."/>
            <person name="Sinclair B."/>
            <person name="Sperling S."/>
            <person name="Stupka E."/>
            <person name="Sugiura K."/>
            <person name="Sultana R."/>
            <person name="Takenaka Y."/>
            <person name="Taki K."/>
            <person name="Tammoja K."/>
            <person name="Tan S.L."/>
            <person name="Tang S."/>
            <person name="Taylor M.S."/>
            <person name="Tegner J."/>
            <person name="Teichmann S.A."/>
            <person name="Ueda H.R."/>
            <person name="van Nimwegen E."/>
            <person name="Verardo R."/>
            <person name="Wei C.L."/>
            <person name="Yagi K."/>
            <person name="Yamanishi H."/>
            <person name="Zabarovsky E."/>
            <person name="Zhu S."/>
            <person name="Zimmer A."/>
            <person name="Hide W."/>
            <person name="Bult C."/>
            <person name="Grimmond S.M."/>
            <person name="Teasdale R.D."/>
            <person name="Liu E.T."/>
            <person name="Brusic V."/>
            <person name="Quackenbush J."/>
            <person name="Wahlestedt C."/>
            <person name="Mattick J.S."/>
            <person name="Hume D.A."/>
            <person name="Kai C."/>
            <person name="Sasaki D."/>
            <person name="Tomaru Y."/>
            <person name="Fukuda S."/>
            <person name="Kanamori-Katayama M."/>
            <person name="Suzuki M."/>
            <person name="Aoki J."/>
            <person name="Arakawa T."/>
            <person name="Iida J."/>
            <person name="Imamura K."/>
            <person name="Itoh M."/>
            <person name="Kato T."/>
            <person name="Kawaji H."/>
            <person name="Kawagashira N."/>
            <person name="Kawashima T."/>
            <person name="Kojima M."/>
            <person name="Kondo S."/>
            <person name="Konno H."/>
            <person name="Nakano K."/>
            <person name="Ninomiya N."/>
            <person name="Nishio T."/>
            <person name="Okada M."/>
            <person name="Plessy C."/>
            <person name="Shibata K."/>
            <person name="Shiraki T."/>
            <person name="Suzuki S."/>
            <person name="Tagami M."/>
            <person name="Waki K."/>
            <person name="Watahiki A."/>
            <person name="Okamura-Oho Y."/>
            <person name="Suzuki H."/>
            <person name="Kawai J."/>
            <person name="Hayashizaki Y."/>
        </authorList>
    </citation>
    <scope>NUCLEOTIDE SEQUENCE [LARGE SCALE MRNA]</scope>
    <source>
        <strain>C57BL/6J</strain>
        <tissue>Testis</tissue>
    </source>
</reference>
<reference key="3">
    <citation type="journal article" date="2004" name="Genome Res.">
        <title>The status, quality, and expansion of the NIH full-length cDNA project: the Mammalian Gene Collection (MGC).</title>
        <authorList>
            <consortium name="The MGC Project Team"/>
        </authorList>
    </citation>
    <scope>NUCLEOTIDE SEQUENCE [LARGE SCALE MRNA]</scope>
    <source>
        <tissue>Testis</tissue>
    </source>
</reference>
<reference key="4">
    <citation type="journal article" date="2010" name="Cell">
        <title>A tissue-specific atlas of mouse protein phosphorylation and expression.</title>
        <authorList>
            <person name="Huttlin E.L."/>
            <person name="Jedrychowski M.P."/>
            <person name="Elias J.E."/>
            <person name="Goswami T."/>
            <person name="Rad R."/>
            <person name="Beausoleil S.A."/>
            <person name="Villen J."/>
            <person name="Haas W."/>
            <person name="Sowa M.E."/>
            <person name="Gygi S.P."/>
        </authorList>
    </citation>
    <scope>IDENTIFICATION BY MASS SPECTROMETRY [LARGE SCALE ANALYSIS]</scope>
    <source>
        <tissue>Testis</tissue>
    </source>
</reference>
<gene>
    <name type="primary">Syngr4</name>
</gene>
<proteinExistence type="evidence at protein level"/>
<protein>
    <recommendedName>
        <fullName>Synaptogyrin-4</fullName>
    </recommendedName>
</protein>
<feature type="chain" id="PRO_0000183999" description="Synaptogyrin-4">
    <location>
        <begin position="1"/>
        <end position="233"/>
    </location>
</feature>
<feature type="transmembrane region" description="Helical" evidence="1">
    <location>
        <begin position="25"/>
        <end position="45"/>
    </location>
</feature>
<feature type="transmembrane region" description="Helical" evidence="1">
    <location>
        <begin position="66"/>
        <end position="86"/>
    </location>
</feature>
<feature type="transmembrane region" description="Helical" evidence="1">
    <location>
        <begin position="104"/>
        <end position="124"/>
    </location>
</feature>
<feature type="transmembrane region" description="Helical" evidence="1">
    <location>
        <begin position="145"/>
        <end position="165"/>
    </location>
</feature>
<feature type="domain" description="MARVEL" evidence="2">
    <location>
        <begin position="18"/>
        <end position="169"/>
    </location>
</feature>
<feature type="region of interest" description="Disordered" evidence="3">
    <location>
        <begin position="191"/>
        <end position="233"/>
    </location>
</feature>
<feature type="compositionally biased region" description="Polar residues" evidence="3">
    <location>
        <begin position="204"/>
        <end position="219"/>
    </location>
</feature>
<feature type="sequence conflict" description="In Ref. 1; CAA09755." evidence="4" ref="1">
    <original>F</original>
    <variation>L</variation>
    <location>
        <position position="33"/>
    </location>
</feature>
<feature type="sequence conflict" description="In Ref. 1; CAA09755." evidence="4" ref="1">
    <original>F</original>
    <variation>L</variation>
    <location>
        <position position="38"/>
    </location>
</feature>
<feature type="sequence conflict" description="In Ref. 2; BAB24384." evidence="4" ref="2">
    <original>L</original>
    <variation>F</variation>
    <location>
        <position position="149"/>
    </location>
</feature>
<accession>Q9Z1L2</accession>
<accession>Q80ZT0</accession>
<accession>Q9DA94</accession>
<organism>
    <name type="scientific">Mus musculus</name>
    <name type="common">Mouse</name>
    <dbReference type="NCBI Taxonomy" id="10090"/>
    <lineage>
        <taxon>Eukaryota</taxon>
        <taxon>Metazoa</taxon>
        <taxon>Chordata</taxon>
        <taxon>Craniata</taxon>
        <taxon>Vertebrata</taxon>
        <taxon>Euteleostomi</taxon>
        <taxon>Mammalia</taxon>
        <taxon>Eutheria</taxon>
        <taxon>Euarchontoglires</taxon>
        <taxon>Glires</taxon>
        <taxon>Rodentia</taxon>
        <taxon>Myomorpha</taxon>
        <taxon>Muroidea</taxon>
        <taxon>Muridae</taxon>
        <taxon>Murinae</taxon>
        <taxon>Mus</taxon>
        <taxon>Mus</taxon>
    </lineage>
</organism>
<evidence type="ECO:0000255" key="1"/>
<evidence type="ECO:0000255" key="2">
    <source>
        <dbReference type="PROSITE-ProRule" id="PRU00581"/>
    </source>
</evidence>
<evidence type="ECO:0000256" key="3">
    <source>
        <dbReference type="SAM" id="MobiDB-lite"/>
    </source>
</evidence>
<evidence type="ECO:0000305" key="4"/>
<keyword id="KW-0472">Membrane</keyword>
<keyword id="KW-1185">Reference proteome</keyword>
<keyword id="KW-0812">Transmembrane</keyword>
<keyword id="KW-1133">Transmembrane helix</keyword>
<name>SNG4_MOUSE</name>
<dbReference type="EMBL" id="AJ011734">
    <property type="protein sequence ID" value="CAA09755.1"/>
    <property type="molecule type" value="mRNA"/>
</dbReference>
<dbReference type="EMBL" id="AK006050">
    <property type="protein sequence ID" value="BAB24384.1"/>
    <property type="molecule type" value="mRNA"/>
</dbReference>
<dbReference type="EMBL" id="BC048469">
    <property type="protein sequence ID" value="AAH48469.1"/>
    <property type="molecule type" value="mRNA"/>
</dbReference>
<dbReference type="CCDS" id="CCDS39962.1"/>
<dbReference type="RefSeq" id="NP_001277993.1">
    <property type="nucleotide sequence ID" value="NM_001291064.1"/>
</dbReference>
<dbReference type="RefSeq" id="NP_067457.2">
    <property type="nucleotide sequence ID" value="NM_021482.2"/>
</dbReference>
<dbReference type="RefSeq" id="XP_006541097.1">
    <property type="nucleotide sequence ID" value="XM_006541034.1"/>
</dbReference>
<dbReference type="SMR" id="Q9Z1L2"/>
<dbReference type="FunCoup" id="Q9Z1L2">
    <property type="interactions" value="4"/>
</dbReference>
<dbReference type="STRING" id="10090.ENSMUSP00000047035"/>
<dbReference type="iPTMnet" id="Q9Z1L2"/>
<dbReference type="PhosphoSitePlus" id="Q9Z1L2"/>
<dbReference type="PaxDb" id="10090-ENSMUSP00000047035"/>
<dbReference type="ProteomicsDB" id="261529"/>
<dbReference type="DNASU" id="58867"/>
<dbReference type="GeneID" id="58867"/>
<dbReference type="KEGG" id="mmu:58867"/>
<dbReference type="UCSC" id="uc009gxp.1">
    <property type="organism name" value="mouse"/>
</dbReference>
<dbReference type="AGR" id="MGI:1928903"/>
<dbReference type="CTD" id="23546"/>
<dbReference type="MGI" id="MGI:1928903">
    <property type="gene designation" value="Syngr4"/>
</dbReference>
<dbReference type="eggNOG" id="KOG4016">
    <property type="taxonomic scope" value="Eukaryota"/>
</dbReference>
<dbReference type="InParanoid" id="Q9Z1L2"/>
<dbReference type="OrthoDB" id="10041611at2759"/>
<dbReference type="PhylomeDB" id="Q9Z1L2"/>
<dbReference type="TreeFam" id="TF320995"/>
<dbReference type="BioGRID-ORCS" id="58867">
    <property type="hits" value="6 hits in 80 CRISPR screens"/>
</dbReference>
<dbReference type="PRO" id="PR:Q9Z1L2"/>
<dbReference type="Proteomes" id="UP000000589">
    <property type="component" value="Unplaced"/>
</dbReference>
<dbReference type="RNAct" id="Q9Z1L2">
    <property type="molecule type" value="protein"/>
</dbReference>
<dbReference type="GO" id="GO:0016020">
    <property type="term" value="C:membrane"/>
    <property type="evidence" value="ECO:0007669"/>
    <property type="project" value="UniProtKB-SubCell"/>
</dbReference>
<dbReference type="InterPro" id="IPR008253">
    <property type="entry name" value="Marvel"/>
</dbReference>
<dbReference type="InterPro" id="IPR016579">
    <property type="entry name" value="Synaptogyrin"/>
</dbReference>
<dbReference type="PANTHER" id="PTHR10838">
    <property type="entry name" value="SYNAPTOGYRIN"/>
    <property type="match status" value="1"/>
</dbReference>
<dbReference type="PANTHER" id="PTHR10838:SF22">
    <property type="entry name" value="SYNAPTOGYRIN-4"/>
    <property type="match status" value="1"/>
</dbReference>
<dbReference type="Pfam" id="PF01284">
    <property type="entry name" value="MARVEL"/>
    <property type="match status" value="1"/>
</dbReference>
<dbReference type="PIRSF" id="PIRSF011282">
    <property type="entry name" value="Synaptogyrin"/>
    <property type="match status" value="1"/>
</dbReference>
<dbReference type="PROSITE" id="PS51225">
    <property type="entry name" value="MARVEL"/>
    <property type="match status" value="1"/>
</dbReference>